<accession>O74829</accession>
<accession>O59750</accession>
<name>YN2F_SCHPO</name>
<evidence type="ECO:0000255" key="1"/>
<evidence type="ECO:0000256" key="2">
    <source>
        <dbReference type="SAM" id="MobiDB-lite"/>
    </source>
</evidence>
<evidence type="ECO:0000269" key="3">
    <source>
    </source>
</evidence>
<evidence type="ECO:0000305" key="4"/>
<proteinExistence type="evidence at protein level"/>
<feature type="chain" id="PRO_0000084888" description="Uncharacterized MFS-type transporter C530.15c">
    <location>
        <begin position="1"/>
        <end position="516"/>
    </location>
</feature>
<feature type="transmembrane region" description="Helical" evidence="1">
    <location>
        <begin position="77"/>
        <end position="97"/>
    </location>
</feature>
<feature type="transmembrane region" description="Helical" evidence="1">
    <location>
        <begin position="111"/>
        <end position="131"/>
    </location>
</feature>
<feature type="transmembrane region" description="Helical" evidence="1">
    <location>
        <begin position="143"/>
        <end position="163"/>
    </location>
</feature>
<feature type="transmembrane region" description="Helical" evidence="1">
    <location>
        <begin position="166"/>
        <end position="186"/>
    </location>
</feature>
<feature type="transmembrane region" description="Helical" evidence="1">
    <location>
        <begin position="198"/>
        <end position="218"/>
    </location>
</feature>
<feature type="transmembrane region" description="Helical" evidence="1">
    <location>
        <begin position="231"/>
        <end position="251"/>
    </location>
</feature>
<feature type="transmembrane region" description="Helical" evidence="1">
    <location>
        <begin position="301"/>
        <end position="321"/>
    </location>
</feature>
<feature type="transmembrane region" description="Helical" evidence="1">
    <location>
        <begin position="345"/>
        <end position="365"/>
    </location>
</feature>
<feature type="transmembrane region" description="Helical" evidence="1">
    <location>
        <begin position="386"/>
        <end position="406"/>
    </location>
</feature>
<feature type="transmembrane region" description="Helical" evidence="1">
    <location>
        <begin position="412"/>
        <end position="432"/>
    </location>
</feature>
<feature type="transmembrane region" description="Helical" evidence="1">
    <location>
        <begin position="439"/>
        <end position="461"/>
    </location>
</feature>
<feature type="transmembrane region" description="Helical" evidence="1">
    <location>
        <begin position="481"/>
        <end position="501"/>
    </location>
</feature>
<feature type="region of interest" description="Disordered" evidence="2">
    <location>
        <begin position="1"/>
        <end position="35"/>
    </location>
</feature>
<feature type="compositionally biased region" description="Basic and acidic residues" evidence="2">
    <location>
        <begin position="16"/>
        <end position="28"/>
    </location>
</feature>
<feature type="modified residue" description="Phosphoserine" evidence="3">
    <location>
        <position position="31"/>
    </location>
</feature>
<protein>
    <recommendedName>
        <fullName>Uncharacterized MFS-type transporter C530.15c</fullName>
    </recommendedName>
</protein>
<gene>
    <name type="ORF">SPBC530.15c</name>
    <name type="ORF">SPBC661.01</name>
</gene>
<organism>
    <name type="scientific">Schizosaccharomyces pombe (strain 972 / ATCC 24843)</name>
    <name type="common">Fission yeast</name>
    <dbReference type="NCBI Taxonomy" id="284812"/>
    <lineage>
        <taxon>Eukaryota</taxon>
        <taxon>Fungi</taxon>
        <taxon>Dikarya</taxon>
        <taxon>Ascomycota</taxon>
        <taxon>Taphrinomycotina</taxon>
        <taxon>Schizosaccharomycetes</taxon>
        <taxon>Schizosaccharomycetales</taxon>
        <taxon>Schizosaccharomycetaceae</taxon>
        <taxon>Schizosaccharomyces</taxon>
    </lineage>
</organism>
<sequence>MAERTSESSSESASFDLEKQQSNHHDRYQSSVSSELEESLKKYPVISNPQDFIVTLDGPDDPDLAVNWPLAKKLRNVAVMGSACLCAGFGSSIFSGAVPEVMVKFHVCRTVALLGISLYVLGFASGPVVWAPMCELFGRRRPMIIAVFIFCIFHIAVATAKDIQTVMICRFFCGFFGSSPITTVAGSFSDMFSARTRGLVIAVYSAIIFNGPLMSPIVGGFIGKSYLGWRWTSYITAIMGFTAFTSMIIFHRETYTRTITEIRASKVRVLTGNYCLHAKSEEEPLEFSYFFHKYFTFPLRLLIFEPILLVVSTYTAFVYGILYGLLEAYPVIFGESRKWRLGVESLPYLAIFVGVCIGCSSVALFQPYYFKKMDENKGRPVPEARLPSMMIGCIVFPIGIFWLAWTGNYPWIHWIVPTLAGSFIGFGIITIFQQTINYIIDCYSGCSASAIAANTLLRSSFGAAFPLFTTQMFNNLGIGWAGSLVGFVAVGLIPVPFMLFLYGPKLRQMSKHCLKD</sequence>
<comment type="subcellular location">
    <subcellularLocation>
        <location evidence="4">Membrane</location>
        <topology evidence="4">Multi-pass membrane protein</topology>
    </subcellularLocation>
</comment>
<comment type="similarity">
    <text evidence="4">Belongs to the major facilitator superfamily.</text>
</comment>
<dbReference type="EMBL" id="CU329671">
    <property type="protein sequence ID" value="CAA19181.2"/>
    <property type="molecule type" value="Genomic_DNA"/>
</dbReference>
<dbReference type="PIR" id="T40631">
    <property type="entry name" value="T40631"/>
</dbReference>
<dbReference type="RefSeq" id="NP_595328.2">
    <property type="nucleotide sequence ID" value="NM_001021235.3"/>
</dbReference>
<dbReference type="FunCoup" id="O74829">
    <property type="interactions" value="131"/>
</dbReference>
<dbReference type="iPTMnet" id="O74829"/>
<dbReference type="PaxDb" id="4896-SPBC530.15c.1"/>
<dbReference type="EnsemblFungi" id="SPBC530.15c.1">
    <property type="protein sequence ID" value="SPBC530.15c.1:pep"/>
    <property type="gene ID" value="SPBC530.15c"/>
</dbReference>
<dbReference type="KEGG" id="spo:2540262"/>
<dbReference type="PomBase" id="SPBC530.15c"/>
<dbReference type="VEuPathDB" id="FungiDB:SPBC530.15c"/>
<dbReference type="eggNOG" id="KOG0255">
    <property type="taxonomic scope" value="Eukaryota"/>
</dbReference>
<dbReference type="HOGENOM" id="CLU_008455_11_6_1"/>
<dbReference type="InParanoid" id="O74829"/>
<dbReference type="OMA" id="RSIHWMA"/>
<dbReference type="PhylomeDB" id="O74829"/>
<dbReference type="PRO" id="PR:O74829"/>
<dbReference type="Proteomes" id="UP000002485">
    <property type="component" value="Chromosome II"/>
</dbReference>
<dbReference type="GO" id="GO:0005886">
    <property type="term" value="C:plasma membrane"/>
    <property type="evidence" value="ECO:0000266"/>
    <property type="project" value="PomBase"/>
</dbReference>
<dbReference type="GO" id="GO:0015606">
    <property type="term" value="F:spermidine transmembrane transporter activity"/>
    <property type="evidence" value="ECO:0000266"/>
    <property type="project" value="PomBase"/>
</dbReference>
<dbReference type="GO" id="GO:0000297">
    <property type="term" value="F:spermine transmembrane transporter activity"/>
    <property type="evidence" value="ECO:0000266"/>
    <property type="project" value="PomBase"/>
</dbReference>
<dbReference type="GO" id="GO:0022857">
    <property type="term" value="F:transmembrane transporter activity"/>
    <property type="evidence" value="ECO:0000318"/>
    <property type="project" value="GO_Central"/>
</dbReference>
<dbReference type="GO" id="GO:1903711">
    <property type="term" value="P:spermidine transmembrane transport"/>
    <property type="evidence" value="ECO:0000305"/>
    <property type="project" value="PomBase"/>
</dbReference>
<dbReference type="GO" id="GO:1903710">
    <property type="term" value="P:spermine transmembrane transport"/>
    <property type="evidence" value="ECO:0000305"/>
    <property type="project" value="PomBase"/>
</dbReference>
<dbReference type="GO" id="GO:0055085">
    <property type="term" value="P:transmembrane transport"/>
    <property type="evidence" value="ECO:0000318"/>
    <property type="project" value="GO_Central"/>
</dbReference>
<dbReference type="CDD" id="cd17323">
    <property type="entry name" value="MFS_Tpo1_MDR_like"/>
    <property type="match status" value="1"/>
</dbReference>
<dbReference type="FunFam" id="1.20.1250.20:FF:000011">
    <property type="entry name" value="MFS multidrug transporter, putative"/>
    <property type="match status" value="1"/>
</dbReference>
<dbReference type="Gene3D" id="1.20.1250.20">
    <property type="entry name" value="MFS general substrate transporter like domains"/>
    <property type="match status" value="1"/>
</dbReference>
<dbReference type="InterPro" id="IPR011701">
    <property type="entry name" value="MFS"/>
</dbReference>
<dbReference type="InterPro" id="IPR020846">
    <property type="entry name" value="MFS_dom"/>
</dbReference>
<dbReference type="InterPro" id="IPR036259">
    <property type="entry name" value="MFS_trans_sf"/>
</dbReference>
<dbReference type="PANTHER" id="PTHR23502">
    <property type="entry name" value="MAJOR FACILITATOR SUPERFAMILY"/>
    <property type="match status" value="1"/>
</dbReference>
<dbReference type="PANTHER" id="PTHR23502:SF179">
    <property type="entry name" value="SPERMIDINE FAMILY TRANSPORTER"/>
    <property type="match status" value="1"/>
</dbReference>
<dbReference type="Pfam" id="PF07690">
    <property type="entry name" value="MFS_1"/>
    <property type="match status" value="1"/>
</dbReference>
<dbReference type="SUPFAM" id="SSF103473">
    <property type="entry name" value="MFS general substrate transporter"/>
    <property type="match status" value="1"/>
</dbReference>
<dbReference type="PROSITE" id="PS50850">
    <property type="entry name" value="MFS"/>
    <property type="match status" value="1"/>
</dbReference>
<keyword id="KW-0472">Membrane</keyword>
<keyword id="KW-0597">Phosphoprotein</keyword>
<keyword id="KW-1185">Reference proteome</keyword>
<keyword id="KW-0812">Transmembrane</keyword>
<keyword id="KW-1133">Transmembrane helix</keyword>
<keyword id="KW-0813">Transport</keyword>
<reference key="1">
    <citation type="journal article" date="2002" name="Nature">
        <title>The genome sequence of Schizosaccharomyces pombe.</title>
        <authorList>
            <person name="Wood V."/>
            <person name="Gwilliam R."/>
            <person name="Rajandream M.A."/>
            <person name="Lyne M.H."/>
            <person name="Lyne R."/>
            <person name="Stewart A."/>
            <person name="Sgouros J.G."/>
            <person name="Peat N."/>
            <person name="Hayles J."/>
            <person name="Baker S.G."/>
            <person name="Basham D."/>
            <person name="Bowman S."/>
            <person name="Brooks K."/>
            <person name="Brown D."/>
            <person name="Brown S."/>
            <person name="Chillingworth T."/>
            <person name="Churcher C.M."/>
            <person name="Collins M."/>
            <person name="Connor R."/>
            <person name="Cronin A."/>
            <person name="Davis P."/>
            <person name="Feltwell T."/>
            <person name="Fraser A."/>
            <person name="Gentles S."/>
            <person name="Goble A."/>
            <person name="Hamlin N."/>
            <person name="Harris D.E."/>
            <person name="Hidalgo J."/>
            <person name="Hodgson G."/>
            <person name="Holroyd S."/>
            <person name="Hornsby T."/>
            <person name="Howarth S."/>
            <person name="Huckle E.J."/>
            <person name="Hunt S."/>
            <person name="Jagels K."/>
            <person name="James K.D."/>
            <person name="Jones L."/>
            <person name="Jones M."/>
            <person name="Leather S."/>
            <person name="McDonald S."/>
            <person name="McLean J."/>
            <person name="Mooney P."/>
            <person name="Moule S."/>
            <person name="Mungall K.L."/>
            <person name="Murphy L.D."/>
            <person name="Niblett D."/>
            <person name="Odell C."/>
            <person name="Oliver K."/>
            <person name="O'Neil S."/>
            <person name="Pearson D."/>
            <person name="Quail M.A."/>
            <person name="Rabbinowitsch E."/>
            <person name="Rutherford K.M."/>
            <person name="Rutter S."/>
            <person name="Saunders D."/>
            <person name="Seeger K."/>
            <person name="Sharp S."/>
            <person name="Skelton J."/>
            <person name="Simmonds M.N."/>
            <person name="Squares R."/>
            <person name="Squares S."/>
            <person name="Stevens K."/>
            <person name="Taylor K."/>
            <person name="Taylor R.G."/>
            <person name="Tivey A."/>
            <person name="Walsh S.V."/>
            <person name="Warren T."/>
            <person name="Whitehead S."/>
            <person name="Woodward J.R."/>
            <person name="Volckaert G."/>
            <person name="Aert R."/>
            <person name="Robben J."/>
            <person name="Grymonprez B."/>
            <person name="Weltjens I."/>
            <person name="Vanstreels E."/>
            <person name="Rieger M."/>
            <person name="Schaefer M."/>
            <person name="Mueller-Auer S."/>
            <person name="Gabel C."/>
            <person name="Fuchs M."/>
            <person name="Duesterhoeft A."/>
            <person name="Fritzc C."/>
            <person name="Holzer E."/>
            <person name="Moestl D."/>
            <person name="Hilbert H."/>
            <person name="Borzym K."/>
            <person name="Langer I."/>
            <person name="Beck A."/>
            <person name="Lehrach H."/>
            <person name="Reinhardt R."/>
            <person name="Pohl T.M."/>
            <person name="Eger P."/>
            <person name="Zimmermann W."/>
            <person name="Wedler H."/>
            <person name="Wambutt R."/>
            <person name="Purnelle B."/>
            <person name="Goffeau A."/>
            <person name="Cadieu E."/>
            <person name="Dreano S."/>
            <person name="Gloux S."/>
            <person name="Lelaure V."/>
            <person name="Mottier S."/>
            <person name="Galibert F."/>
            <person name="Aves S.J."/>
            <person name="Xiang Z."/>
            <person name="Hunt C."/>
            <person name="Moore K."/>
            <person name="Hurst S.M."/>
            <person name="Lucas M."/>
            <person name="Rochet M."/>
            <person name="Gaillardin C."/>
            <person name="Tallada V.A."/>
            <person name="Garzon A."/>
            <person name="Thode G."/>
            <person name="Daga R.R."/>
            <person name="Cruzado L."/>
            <person name="Jimenez J."/>
            <person name="Sanchez M."/>
            <person name="del Rey F."/>
            <person name="Benito J."/>
            <person name="Dominguez A."/>
            <person name="Revuelta J.L."/>
            <person name="Moreno S."/>
            <person name="Armstrong J."/>
            <person name="Forsburg S.L."/>
            <person name="Cerutti L."/>
            <person name="Lowe T."/>
            <person name="McCombie W.R."/>
            <person name="Paulsen I."/>
            <person name="Potashkin J."/>
            <person name="Shpakovski G.V."/>
            <person name="Ussery D."/>
            <person name="Barrell B.G."/>
            <person name="Nurse P."/>
        </authorList>
    </citation>
    <scope>NUCLEOTIDE SEQUENCE [LARGE SCALE GENOMIC DNA]</scope>
    <source>
        <strain>972 / ATCC 24843</strain>
    </source>
</reference>
<reference key="2">
    <citation type="journal article" date="2008" name="J. Proteome Res.">
        <title>Phosphoproteome analysis of fission yeast.</title>
        <authorList>
            <person name="Wilson-Grady J.T."/>
            <person name="Villen J."/>
            <person name="Gygi S.P."/>
        </authorList>
    </citation>
    <scope>PHOSPHORYLATION [LARGE SCALE ANALYSIS] AT SER-31</scope>
    <scope>IDENTIFICATION BY MASS SPECTROMETRY</scope>
</reference>